<protein>
    <recommendedName>
        <fullName>Cell cycle link protein</fullName>
        <shortName>Clink</shortName>
    </recommendedName>
</protein>
<organism>
    <name type="scientific">Faba bean necrotic yellows virus (isolate Egyptian EV1-93)</name>
    <name type="common">FBNYV</name>
    <dbReference type="NCBI Taxonomy" id="291603"/>
    <lineage>
        <taxon>Viruses</taxon>
        <taxon>Monodnaviria</taxon>
        <taxon>Shotokuvirae</taxon>
        <taxon>Cressdnaviricota</taxon>
        <taxon>Arfiviricetes</taxon>
        <taxon>Mulpavirales</taxon>
        <taxon>Nanoviridae</taxon>
        <taxon>Nanovirus</taxon>
        <taxon>Faba bean necrotic yellows virus</taxon>
    </lineage>
</organism>
<feature type="chain" id="PRO_0000338625" description="Cell cycle link protein">
    <location>
        <begin position="1"/>
        <end position="169"/>
    </location>
</feature>
<feature type="region of interest" description="Binding to host SKP1 protein" evidence="2">
    <location>
        <begin position="9"/>
        <end position="22"/>
    </location>
</feature>
<feature type="short sequence motif" description="LXCXE motif, interaction with host RBR" evidence="1">
    <location>
        <begin position="110"/>
        <end position="114"/>
    </location>
</feature>
<feature type="mutagenesis site" description="Loss of binding to host SKP1. No effect on viral replication stimulation." evidence="3">
    <original>P</original>
    <variation>L</variation>
    <location>
        <position position="10"/>
    </location>
</feature>
<feature type="mutagenesis site" description="Loss of binding to host SKP1. No effect on viral replication stimulation." evidence="3">
    <original>I</original>
    <variation>A</variation>
    <location>
        <position position="17"/>
    </location>
</feature>
<feature type="mutagenesis site" description="Complete loss of viral replication stimulation; when associated with A-114." evidence="3">
    <original>C</original>
    <variation>R</variation>
    <location>
        <position position="112"/>
    </location>
</feature>
<feature type="mutagenesis site" description="Complete loss of viral replication stimulation; when associated with R-112." evidence="3">
    <original>E</original>
    <variation>A</variation>
    <location>
        <position position="114"/>
    </location>
</feature>
<comment type="function">
    <text evidence="4">Interacts with and disrupts the function of host retinoblastoma-related proteins RBR, which are key regulators of the cell cycle. Induces transcriptional activation of E2F-regulated S-phase and G2/M-phase-specific genes. Inactivation of the ability of RBR to arrest the cell cycle leads to the stimulation of viral DNA replication.</text>
</comment>
<comment type="subunit">
    <text evidence="6">Interacts with host SKP1. Interacts (via LXCXE domain) with host retinoblastoma-related protein 1 (RBR1). Interacts (via LXCXE domain) with retinoblastoma-related proteins (RBR) (Probable).</text>
</comment>
<comment type="similarity">
    <text evidence="5">Belongs to the nanovirus Clink protein family.</text>
</comment>
<organismHost>
    <name type="scientific">Cicer arietinum</name>
    <name type="common">Chickpea</name>
    <name type="synonym">Garbanzo</name>
    <dbReference type="NCBI Taxonomy" id="3827"/>
</organismHost>
<organismHost>
    <name type="scientific">Lens culinaris</name>
    <name type="common">Lentil</name>
    <name type="synonym">Cicer lens</name>
    <dbReference type="NCBI Taxonomy" id="3864"/>
</organismHost>
<organismHost>
    <name type="scientific">Phaseolus vulgaris</name>
    <name type="common">Kidney bean</name>
    <name type="synonym">French bean</name>
    <dbReference type="NCBI Taxonomy" id="3885"/>
</organismHost>
<organismHost>
    <name type="scientific">Vicia faba</name>
    <name type="common">Broad bean</name>
    <name type="synonym">Faba vulgaris</name>
    <dbReference type="NCBI Taxonomy" id="3906"/>
</organismHost>
<keyword id="KW-0945">Host-virus interaction</keyword>
<keyword id="KW-1185">Reference proteome</keyword>
<evidence type="ECO:0000250" key="1"/>
<evidence type="ECO:0000255" key="2"/>
<evidence type="ECO:0000269" key="3">
    <source>
    </source>
</evidence>
<evidence type="ECO:0000269" key="4">
    <source>
    </source>
</evidence>
<evidence type="ECO:0000305" key="5"/>
<evidence type="ECO:0000305" key="6">
    <source>
    </source>
</evidence>
<gene>
    <name type="primary">DNA-C</name>
    <name type="synonym">C10</name>
</gene>
<accession>Q9WIJ4</accession>
<reference key="1">
    <citation type="journal article" date="1998" name="J. Gen. Virol.">
        <title>Ten distinct circular ssDNA components, four of which encode putative replication-associated proteins, are associated with the faba bean necrotic yellows virus genome.</title>
        <authorList>
            <person name="Katul L."/>
            <person name="Timchenko T."/>
            <person name="Gronenborn B."/>
            <person name="Vetten H.J."/>
        </authorList>
    </citation>
    <scope>NUCLEOTIDE SEQUENCE [GENOMIC DNA]</scope>
</reference>
<reference key="2">
    <citation type="journal article" date="2000" name="J. Virol.">
        <title>Clink, a nanovirus-encoded protein, binds both pRB and SKP1.</title>
        <authorList>
            <person name="Aronson M.N."/>
            <person name="Meyer A.D."/>
            <person name="Gyorgyey J."/>
            <person name="Katul L."/>
            <person name="Vetten H.J."/>
            <person name="Gronenborn B."/>
            <person name="Timchenko T."/>
        </authorList>
    </citation>
    <scope>INTERACTION WITH MEDICAGO SATIVA SKP1 AND ZEA MAYS RBR1</scope>
    <scope>MUTAGENESIS OF PRO-10; ILE-17; CYS-112 AND GLU-114</scope>
</reference>
<reference key="3">
    <citation type="journal article" date="2007" name="J. Virol.">
        <title>The nanovirus-encoded Clink protein affects plant cell cycle regulation through interaction with the retinoblastoma-related protein.</title>
        <authorList>
            <person name="Lageix S."/>
            <person name="Catrice O."/>
            <person name="Deragon J.-M."/>
            <person name="Gronenborn B."/>
            <person name="Pelissier T."/>
            <person name="Ramirez B.C."/>
        </authorList>
    </citation>
    <scope>FUNCTION</scope>
</reference>
<sequence length="169" mass="19732">MGLKYFSHLPEELREKIVHDHLQQERKKEFLEKAIEDSCRRHVSLLKSDPSPSEMYSLSKFLDSLADYVGRQFNTRCLIKWRKDVPANIKFQVMEEQHLRLYGFLDMDDLSCRELLPPEEDDDITYEDGMIVNCSELDKLFAALGIRVVYITVSNNCICTPLNKDIVIS</sequence>
<proteinExistence type="evidence at protein level"/>
<name>CLINK_FBNY1</name>
<dbReference type="EMBL" id="AJ132179">
    <property type="protein sequence ID" value="CAB44019.1"/>
    <property type="molecule type" value="Genomic_DNA"/>
</dbReference>
<dbReference type="SMR" id="Q9WIJ4"/>
<dbReference type="KEGG" id="vg:993372"/>
<dbReference type="Proteomes" id="UP001508024">
    <property type="component" value="Genome"/>
</dbReference>